<name>PCCA_MOUSE</name>
<dbReference type="EC" id="6.4.1.3" evidence="2"/>
<dbReference type="EMBL" id="AY046947">
    <property type="protein sequence ID" value="AAL02364.1"/>
    <property type="molecule type" value="mRNA"/>
</dbReference>
<dbReference type="EMBL" id="BC006915">
    <property type="protein sequence ID" value="AAH06915.1"/>
    <property type="molecule type" value="mRNA"/>
</dbReference>
<dbReference type="EMBL" id="BC049802">
    <property type="protein sequence ID" value="AAH49802.1"/>
    <property type="molecule type" value="mRNA"/>
</dbReference>
<dbReference type="CCDS" id="CCDS27350.1"/>
<dbReference type="RefSeq" id="NP_659093.2">
    <property type="nucleotide sequence ID" value="NM_144844.3"/>
</dbReference>
<dbReference type="SMR" id="Q91ZA3"/>
<dbReference type="BioGRID" id="225934">
    <property type="interactions" value="12"/>
</dbReference>
<dbReference type="FunCoup" id="Q91ZA3">
    <property type="interactions" value="1344"/>
</dbReference>
<dbReference type="IntAct" id="Q91ZA3">
    <property type="interactions" value="4"/>
</dbReference>
<dbReference type="MINT" id="Q91ZA3"/>
<dbReference type="STRING" id="10090.ENSMUSP00000038763"/>
<dbReference type="GlyGen" id="Q91ZA3">
    <property type="glycosylation" value="1 site, 1 O-linked glycan (1 site)"/>
</dbReference>
<dbReference type="iPTMnet" id="Q91ZA3"/>
<dbReference type="MetOSite" id="Q91ZA3"/>
<dbReference type="PhosphoSitePlus" id="Q91ZA3"/>
<dbReference type="SwissPalm" id="Q91ZA3"/>
<dbReference type="REPRODUCTION-2DPAGE" id="Q91ZA3"/>
<dbReference type="jPOST" id="Q91ZA3"/>
<dbReference type="PaxDb" id="10090-ENSMUSP00000038763"/>
<dbReference type="ProteomicsDB" id="294030"/>
<dbReference type="Pumba" id="Q91ZA3"/>
<dbReference type="Antibodypedia" id="25211">
    <property type="antibodies" value="195 antibodies from 27 providers"/>
</dbReference>
<dbReference type="DNASU" id="110821"/>
<dbReference type="Ensembl" id="ENSMUST00000038374.13">
    <property type="protein sequence ID" value="ENSMUSP00000038763.7"/>
    <property type="gene ID" value="ENSMUSG00000041650.16"/>
</dbReference>
<dbReference type="GeneID" id="110821"/>
<dbReference type="KEGG" id="mmu:110821"/>
<dbReference type="UCSC" id="uc007vbe.2">
    <property type="organism name" value="mouse"/>
</dbReference>
<dbReference type="AGR" id="MGI:97499"/>
<dbReference type="CTD" id="5095"/>
<dbReference type="MGI" id="MGI:97499">
    <property type="gene designation" value="Pcca"/>
</dbReference>
<dbReference type="VEuPathDB" id="HostDB:ENSMUSG00000041650"/>
<dbReference type="eggNOG" id="KOG0238">
    <property type="taxonomic scope" value="Eukaryota"/>
</dbReference>
<dbReference type="GeneTree" id="ENSGT00940000156083"/>
<dbReference type="HOGENOM" id="CLU_000395_3_3_1"/>
<dbReference type="InParanoid" id="Q91ZA3"/>
<dbReference type="OMA" id="IGPKHYS"/>
<dbReference type="OrthoDB" id="196847at2759"/>
<dbReference type="PhylomeDB" id="Q91ZA3"/>
<dbReference type="TreeFam" id="TF354220"/>
<dbReference type="Reactome" id="R-MMU-196780">
    <property type="pathway name" value="Biotin transport and metabolism"/>
</dbReference>
<dbReference type="Reactome" id="R-MMU-71032">
    <property type="pathway name" value="Propionyl-CoA catabolism"/>
</dbReference>
<dbReference type="UniPathway" id="UPA00945">
    <property type="reaction ID" value="UER00908"/>
</dbReference>
<dbReference type="BioGRID-ORCS" id="110821">
    <property type="hits" value="3 hits in 78 CRISPR screens"/>
</dbReference>
<dbReference type="ChiTaRS" id="Pcca">
    <property type="organism name" value="mouse"/>
</dbReference>
<dbReference type="PRO" id="PR:Q91ZA3"/>
<dbReference type="Proteomes" id="UP000000589">
    <property type="component" value="Chromosome 14"/>
</dbReference>
<dbReference type="RNAct" id="Q91ZA3">
    <property type="molecule type" value="protein"/>
</dbReference>
<dbReference type="Bgee" id="ENSMUSG00000041650">
    <property type="expression patterns" value="Expressed in interventricular septum and 262 other cell types or tissues"/>
</dbReference>
<dbReference type="ExpressionAtlas" id="Q91ZA3">
    <property type="expression patterns" value="baseline and differential"/>
</dbReference>
<dbReference type="GO" id="GO:1902494">
    <property type="term" value="C:catalytic complex"/>
    <property type="evidence" value="ECO:0007669"/>
    <property type="project" value="Ensembl"/>
</dbReference>
<dbReference type="GO" id="GO:0005759">
    <property type="term" value="C:mitochondrial matrix"/>
    <property type="evidence" value="ECO:0000250"/>
    <property type="project" value="UniProtKB"/>
</dbReference>
<dbReference type="GO" id="GO:0005739">
    <property type="term" value="C:mitochondrion"/>
    <property type="evidence" value="ECO:0007005"/>
    <property type="project" value="MGI"/>
</dbReference>
<dbReference type="GO" id="GO:0005524">
    <property type="term" value="F:ATP binding"/>
    <property type="evidence" value="ECO:0007669"/>
    <property type="project" value="UniProtKB-KW"/>
</dbReference>
<dbReference type="GO" id="GO:0019899">
    <property type="term" value="F:enzyme binding"/>
    <property type="evidence" value="ECO:0007669"/>
    <property type="project" value="Ensembl"/>
</dbReference>
<dbReference type="GO" id="GO:0046872">
    <property type="term" value="F:metal ion binding"/>
    <property type="evidence" value="ECO:0007669"/>
    <property type="project" value="UniProtKB-KW"/>
</dbReference>
<dbReference type="GO" id="GO:0004658">
    <property type="term" value="F:propionyl-CoA carboxylase activity"/>
    <property type="evidence" value="ECO:0000315"/>
    <property type="project" value="MGI"/>
</dbReference>
<dbReference type="GO" id="GO:0016042">
    <property type="term" value="P:lipid catabolic process"/>
    <property type="evidence" value="ECO:0007669"/>
    <property type="project" value="UniProtKB-KW"/>
</dbReference>
<dbReference type="CDD" id="cd06850">
    <property type="entry name" value="biotinyl_domain"/>
    <property type="match status" value="1"/>
</dbReference>
<dbReference type="FunFam" id="3.30.1490.20:FF:000003">
    <property type="entry name" value="acetyl-CoA carboxylase isoform X1"/>
    <property type="match status" value="1"/>
</dbReference>
<dbReference type="FunFam" id="3.30.470.20:FF:000028">
    <property type="entry name" value="Methylcrotonoyl-CoA carboxylase subunit alpha, mitochondrial"/>
    <property type="match status" value="1"/>
</dbReference>
<dbReference type="FunFam" id="2.40.50.100:FF:000029">
    <property type="entry name" value="propionyl-CoA carboxylase alpha chain, mitochondrial"/>
    <property type="match status" value="1"/>
</dbReference>
<dbReference type="FunFam" id="3.40.50.20:FF:000010">
    <property type="entry name" value="Propionyl-CoA carboxylase subunit alpha"/>
    <property type="match status" value="1"/>
</dbReference>
<dbReference type="Gene3D" id="2.40.50.100">
    <property type="match status" value="1"/>
</dbReference>
<dbReference type="Gene3D" id="3.30.700.30">
    <property type="match status" value="1"/>
</dbReference>
<dbReference type="Gene3D" id="3.40.50.20">
    <property type="match status" value="1"/>
</dbReference>
<dbReference type="Gene3D" id="3.30.1490.20">
    <property type="entry name" value="ATP-grasp fold, A domain"/>
    <property type="match status" value="1"/>
</dbReference>
<dbReference type="Gene3D" id="3.30.470.20">
    <property type="entry name" value="ATP-grasp fold, B domain"/>
    <property type="match status" value="1"/>
</dbReference>
<dbReference type="InterPro" id="IPR011761">
    <property type="entry name" value="ATP-grasp"/>
</dbReference>
<dbReference type="InterPro" id="IPR013815">
    <property type="entry name" value="ATP_grasp_subdomain_1"/>
</dbReference>
<dbReference type="InterPro" id="IPR005481">
    <property type="entry name" value="BC-like_N"/>
</dbReference>
<dbReference type="InterPro" id="IPR001882">
    <property type="entry name" value="Biotin_BS"/>
</dbReference>
<dbReference type="InterPro" id="IPR050856">
    <property type="entry name" value="Biotin_carboxylase_complex"/>
</dbReference>
<dbReference type="InterPro" id="IPR011764">
    <property type="entry name" value="Biotin_carboxylation_dom"/>
</dbReference>
<dbReference type="InterPro" id="IPR005482">
    <property type="entry name" value="Biotin_COase_C"/>
</dbReference>
<dbReference type="InterPro" id="IPR000089">
    <property type="entry name" value="Biotin_lipoyl"/>
</dbReference>
<dbReference type="InterPro" id="IPR005479">
    <property type="entry name" value="CbamoylP_synth_lsu-like_ATP-bd"/>
</dbReference>
<dbReference type="InterPro" id="IPR041265">
    <property type="entry name" value="PCC_BT"/>
</dbReference>
<dbReference type="InterPro" id="IPR016185">
    <property type="entry name" value="PreATP-grasp_dom_sf"/>
</dbReference>
<dbReference type="InterPro" id="IPR011054">
    <property type="entry name" value="Rudment_hybrid_motif"/>
</dbReference>
<dbReference type="InterPro" id="IPR011053">
    <property type="entry name" value="Single_hybrid_motif"/>
</dbReference>
<dbReference type="NCBIfam" id="NF006367">
    <property type="entry name" value="PRK08591.1"/>
    <property type="match status" value="1"/>
</dbReference>
<dbReference type="PANTHER" id="PTHR18866">
    <property type="entry name" value="CARBOXYLASE:PYRUVATE/ACETYL-COA/PROPIONYL-COA CARBOXYLASE"/>
    <property type="match status" value="1"/>
</dbReference>
<dbReference type="PANTHER" id="PTHR18866:SF33">
    <property type="entry name" value="METHYLCROTONOYL-COA CARBOXYLASE SUBUNIT ALPHA, MITOCHONDRIAL-RELATED"/>
    <property type="match status" value="1"/>
</dbReference>
<dbReference type="Pfam" id="PF02785">
    <property type="entry name" value="Biotin_carb_C"/>
    <property type="match status" value="1"/>
</dbReference>
<dbReference type="Pfam" id="PF00289">
    <property type="entry name" value="Biotin_carb_N"/>
    <property type="match status" value="1"/>
</dbReference>
<dbReference type="Pfam" id="PF00364">
    <property type="entry name" value="Biotin_lipoyl"/>
    <property type="match status" value="1"/>
</dbReference>
<dbReference type="Pfam" id="PF02786">
    <property type="entry name" value="CPSase_L_D2"/>
    <property type="match status" value="1"/>
</dbReference>
<dbReference type="Pfam" id="PF18140">
    <property type="entry name" value="PCC_BT"/>
    <property type="match status" value="1"/>
</dbReference>
<dbReference type="SMART" id="SM00878">
    <property type="entry name" value="Biotin_carb_C"/>
    <property type="match status" value="1"/>
</dbReference>
<dbReference type="SUPFAM" id="SSF56059">
    <property type="entry name" value="Glutathione synthetase ATP-binding domain-like"/>
    <property type="match status" value="1"/>
</dbReference>
<dbReference type="SUPFAM" id="SSF52440">
    <property type="entry name" value="PreATP-grasp domain"/>
    <property type="match status" value="1"/>
</dbReference>
<dbReference type="SUPFAM" id="SSF51246">
    <property type="entry name" value="Rudiment single hybrid motif"/>
    <property type="match status" value="1"/>
</dbReference>
<dbReference type="SUPFAM" id="SSF51230">
    <property type="entry name" value="Single hybrid motif"/>
    <property type="match status" value="1"/>
</dbReference>
<dbReference type="PROSITE" id="PS50975">
    <property type="entry name" value="ATP_GRASP"/>
    <property type="match status" value="1"/>
</dbReference>
<dbReference type="PROSITE" id="PS50979">
    <property type="entry name" value="BC"/>
    <property type="match status" value="1"/>
</dbReference>
<dbReference type="PROSITE" id="PS00188">
    <property type="entry name" value="BIOTIN"/>
    <property type="match status" value="1"/>
</dbReference>
<dbReference type="PROSITE" id="PS50968">
    <property type="entry name" value="BIOTINYL_LIPOYL"/>
    <property type="match status" value="1"/>
</dbReference>
<dbReference type="PROSITE" id="PS00866">
    <property type="entry name" value="CPSASE_1"/>
    <property type="match status" value="1"/>
</dbReference>
<dbReference type="PROSITE" id="PS00867">
    <property type="entry name" value="CPSASE_2"/>
    <property type="match status" value="1"/>
</dbReference>
<comment type="function">
    <text evidence="2 3 4">This is one of the 2 subunits of the biotin-dependent propionyl-CoA carboxylase (PCC), a mitochondrial enzyme involved in the catabolism of odd chain fatty acids, branched-chain amino acids isoleucine, threonine, methionine, and valine and other metabolites. Propionyl-CoA carboxylase catalyzes the carboxylation of propionyl-CoA/propanoyl-CoA to D-methylmalonyl-CoA/(S)-methylmalonyl-CoA (By similarity). Within the holoenzyme, the alpha subunit catalyzes the ATP-dependent carboxylation of the biotin carried by the biotin carboxyl carrier (BCC) domain, while the beta subunit then transfers the carboxyl group from carboxylated biotin to propionyl-CoA (By similarity). Propionyl-CoA carboxylase also significantly acts on butyryl-CoA/butanoyl-CoA, which is converted to ethylmalonyl-CoA/(2S)-ethylmalonyl-CoA (By similarity). Other alternative minor substrates include (2E)-butenoyl-CoA/crotonoyl-CoA (By similarity).</text>
</comment>
<comment type="catalytic activity">
    <reaction evidence="2">
        <text>propanoyl-CoA + hydrogencarbonate + ATP = (S)-methylmalonyl-CoA + ADP + phosphate + H(+)</text>
        <dbReference type="Rhea" id="RHEA:23720"/>
        <dbReference type="ChEBI" id="CHEBI:15378"/>
        <dbReference type="ChEBI" id="CHEBI:17544"/>
        <dbReference type="ChEBI" id="CHEBI:30616"/>
        <dbReference type="ChEBI" id="CHEBI:43474"/>
        <dbReference type="ChEBI" id="CHEBI:57327"/>
        <dbReference type="ChEBI" id="CHEBI:57392"/>
        <dbReference type="ChEBI" id="CHEBI:456216"/>
        <dbReference type="EC" id="6.4.1.3"/>
    </reaction>
    <physiologicalReaction direction="left-to-right" evidence="2">
        <dbReference type="Rhea" id="RHEA:23721"/>
    </physiologicalReaction>
</comment>
<comment type="catalytic activity">
    <reaction evidence="3">
        <text>butanoyl-CoA + hydrogencarbonate + ATP = (2S)-ethylmalonyl-CoA + ADP + phosphate + H(+)</text>
        <dbReference type="Rhea" id="RHEA:59520"/>
        <dbReference type="ChEBI" id="CHEBI:15378"/>
        <dbReference type="ChEBI" id="CHEBI:17544"/>
        <dbReference type="ChEBI" id="CHEBI:30616"/>
        <dbReference type="ChEBI" id="CHEBI:43474"/>
        <dbReference type="ChEBI" id="CHEBI:57371"/>
        <dbReference type="ChEBI" id="CHEBI:60909"/>
        <dbReference type="ChEBI" id="CHEBI:456216"/>
    </reaction>
    <physiologicalReaction direction="left-to-right" evidence="3">
        <dbReference type="Rhea" id="RHEA:59521"/>
    </physiologicalReaction>
</comment>
<comment type="cofactor">
    <cofactor evidence="5">
        <name>Mg(2+)</name>
        <dbReference type="ChEBI" id="CHEBI:18420"/>
    </cofactor>
    <cofactor evidence="5">
        <name>Mn(2+)</name>
        <dbReference type="ChEBI" id="CHEBI:29035"/>
    </cofactor>
    <text evidence="5">Binds 2 magnesium or manganese ions per subunit.</text>
</comment>
<comment type="cofactor">
    <cofactor evidence="7">
        <name>biotin</name>
        <dbReference type="ChEBI" id="CHEBI:57586"/>
    </cofactor>
</comment>
<comment type="pathway">
    <text evidence="2">Metabolic intermediate metabolism; propanoyl-CoA degradation; succinyl-CoA from propanoyl-CoA: step 1/3.</text>
</comment>
<comment type="subunit">
    <text evidence="2 8">The holoenzyme is a dodecamer composed of 6 PCCA/alpha subunits and 6 PCCB/beta subunits (By similarity). Interacts (via the biotin carboxylation domain) with SIRT4 (PubMed:23438705). Interacts with SIRT3 and SIRT5 (PubMed:23438705).</text>
</comment>
<comment type="subcellular location">
    <subcellularLocation>
        <location evidence="2">Mitochondrion matrix</location>
    </subcellularLocation>
</comment>
<comment type="domain">
    <text evidence="4">Consists of an N-terminal biotin carboxylation/carboxylase (BC) domain that catalyzes the transient carboxylation of the biotin covalently attached to the C-terminal biotinyl-binding/biotin carboxyl carrier (BCC) domain.</text>
</comment>
<comment type="PTM">
    <text evidence="8">Acetylated.</text>
</comment>
<comment type="PTM">
    <text evidence="2">The biotin cofactor is covalently attached to the C-terminal biotinyl-binding domain and is required for the catalytic activity. Biotinylation is catalyzed by HLCS.</text>
</comment>
<comment type="disease">
    <text>Propionic acidemia due to recessively inherited deficiency of PCCase activity often causes life-threatening ketosis and acidosis.</text>
</comment>
<gene>
    <name evidence="11" type="primary">Pcca</name>
</gene>
<keyword id="KW-0007">Acetylation</keyword>
<keyword id="KW-0067">ATP-binding</keyword>
<keyword id="KW-0092">Biotin</keyword>
<keyword id="KW-0436">Ligase</keyword>
<keyword id="KW-0442">Lipid degradation</keyword>
<keyword id="KW-0443">Lipid metabolism</keyword>
<keyword id="KW-0460">Magnesium</keyword>
<keyword id="KW-0464">Manganese</keyword>
<keyword id="KW-0479">Metal-binding</keyword>
<keyword id="KW-0496">Mitochondrion</keyword>
<keyword id="KW-0547">Nucleotide-binding</keyword>
<keyword id="KW-0597">Phosphoprotein</keyword>
<keyword id="KW-1185">Reference proteome</keyword>
<keyword id="KW-0809">Transit peptide</keyword>
<proteinExistence type="evidence at protein level"/>
<reference key="1">
    <citation type="journal article" date="2001" name="J. Biol. Chem.">
        <title>Fatal propionic acidemia in mice lacking propionyl-CoA carboxylase and its rescue by postnatal, liver-specific supplementation via a transgene.</title>
        <authorList>
            <person name="Miyazaki T."/>
            <person name="Ohura T."/>
            <person name="Kobayashi M."/>
            <person name="Shigematsu Y."/>
            <person name="Yamaguchi S."/>
            <person name="Suzuki Y."/>
            <person name="Hata I."/>
            <person name="Aoki Y."/>
            <person name="Yang X."/>
            <person name="Minjares C."/>
            <person name="Haruta I."/>
            <person name="Uto H."/>
            <person name="Ito Y."/>
            <person name="Muller U."/>
        </authorList>
    </citation>
    <scope>NUCLEOTIDE SEQUENCE [MRNA]</scope>
    <source>
        <strain>C57BL/6J</strain>
    </source>
</reference>
<reference key="2">
    <citation type="journal article" date="2004" name="Genome Res.">
        <title>The status, quality, and expansion of the NIH full-length cDNA project: the Mammalian Gene Collection (MGC).</title>
        <authorList>
            <consortium name="The MGC Project Team"/>
        </authorList>
    </citation>
    <scope>NUCLEOTIDE SEQUENCE [LARGE SCALE MRNA]</scope>
    <source>
        <strain>FVB/N</strain>
        <tissue>Embryo</tissue>
        <tissue>Mammary tumor</tissue>
    </source>
</reference>
<reference key="3">
    <citation type="journal article" date="2007" name="Proc. Natl. Acad. Sci. U.S.A.">
        <title>Large-scale phosphorylation analysis of mouse liver.</title>
        <authorList>
            <person name="Villen J."/>
            <person name="Beausoleil S.A."/>
            <person name="Gerber S.A."/>
            <person name="Gygi S.P."/>
        </authorList>
    </citation>
    <scope>PHOSPHORYLATION [LARGE SCALE ANALYSIS] AT SER-248</scope>
    <scope>IDENTIFICATION BY MASS SPECTROMETRY [LARGE SCALE ANALYSIS]</scope>
    <source>
        <tissue>Liver</tissue>
    </source>
</reference>
<reference key="4">
    <citation type="journal article" date="2010" name="Cell">
        <title>A tissue-specific atlas of mouse protein phosphorylation and expression.</title>
        <authorList>
            <person name="Huttlin E.L."/>
            <person name="Jedrychowski M.P."/>
            <person name="Elias J.E."/>
            <person name="Goswami T."/>
            <person name="Rad R."/>
            <person name="Beausoleil S.A."/>
            <person name="Villen J."/>
            <person name="Haas W."/>
            <person name="Sowa M.E."/>
            <person name="Gygi S.P."/>
        </authorList>
    </citation>
    <scope>PHOSPHORYLATION [LARGE SCALE ANALYSIS] AT SER-248</scope>
    <scope>IDENTIFICATION BY MASS SPECTROMETRY [LARGE SCALE ANALYSIS]</scope>
    <source>
        <tissue>Brain</tissue>
        <tissue>Brown adipose tissue</tissue>
        <tissue>Heart</tissue>
        <tissue>Kidney</tissue>
        <tissue>Liver</tissue>
        <tissue>Lung</tissue>
        <tissue>Pancreas</tissue>
        <tissue>Spleen</tissue>
        <tissue>Testis</tissue>
    </source>
</reference>
<reference key="5">
    <citation type="journal article" date="2013" name="Mitochondrion">
        <title>Mitochondrial SIRT4-type proteins in Caenorhabditis elegans and mammals interact with pyruvate carboxylase and other acetylated biotin-dependent carboxylases.</title>
        <authorList>
            <person name="Wirth M."/>
            <person name="Karaca S."/>
            <person name="Wenzel D."/>
            <person name="Ho L."/>
            <person name="Tishkoff D."/>
            <person name="Lombard D.B."/>
            <person name="Verdin E."/>
            <person name="Urlaub H."/>
            <person name="Jedrusik-Bode M."/>
            <person name="Fischle W."/>
        </authorList>
    </citation>
    <scope>INTERACTION WITH SIRT4; SIRT3 AND SIRT5</scope>
    <scope>ACETYLATION</scope>
</reference>
<reference key="6">
    <citation type="journal article" date="2013" name="Mol. Cell">
        <title>SIRT5-mediated lysine desuccinylation impacts diverse metabolic pathways.</title>
        <authorList>
            <person name="Park J."/>
            <person name="Chen Y."/>
            <person name="Tishkoff D.X."/>
            <person name="Peng C."/>
            <person name="Tan M."/>
            <person name="Dai L."/>
            <person name="Xie Z."/>
            <person name="Zhang Y."/>
            <person name="Zwaans B.M."/>
            <person name="Skinner M.E."/>
            <person name="Lombard D.B."/>
            <person name="Zhao Y."/>
        </authorList>
    </citation>
    <scope>SUCCINYLATION [LARGE SCALE ANALYSIS] AT LYS-61; LYS-115; LYS-146; LYS-184; LYS-196; LYS-258; LYS-324; LYS-381; LYS-403; LYS-498; LYS-509; LYS-554 AND LYS-644</scope>
    <scope>IDENTIFICATION BY MASS SPECTROMETRY [LARGE SCALE ANALYSIS]</scope>
    <source>
        <tissue>Liver</tissue>
    </source>
</reference>
<reference key="7">
    <citation type="journal article" date="2013" name="Proc. Natl. Acad. Sci. U.S.A.">
        <title>Label-free quantitative proteomics of the lysine acetylome in mitochondria identifies substrates of SIRT3 in metabolic pathways.</title>
        <authorList>
            <person name="Rardin M.J."/>
            <person name="Newman J.C."/>
            <person name="Held J.M."/>
            <person name="Cusack M.P."/>
            <person name="Sorensen D.J."/>
            <person name="Li B."/>
            <person name="Schilling B."/>
            <person name="Mooney S.D."/>
            <person name="Kahn C.R."/>
            <person name="Verdin E."/>
            <person name="Gibson B.W."/>
        </authorList>
    </citation>
    <scope>ACETYLATION [LARGE SCALE ANALYSIS] AT LYS-61; LYS-146; LYS-150; LYS-196; LYS-324 AND LYS-492</scope>
    <scope>IDENTIFICATION BY MASS SPECTROMETRY [LARGE SCALE ANALYSIS]</scope>
    <source>
        <tissue>Liver</tissue>
    </source>
</reference>
<evidence type="ECO:0000250" key="1"/>
<evidence type="ECO:0000250" key="2">
    <source>
        <dbReference type="UniProtKB" id="P05165"/>
    </source>
</evidence>
<evidence type="ECO:0000250" key="3">
    <source>
        <dbReference type="UniProtKB" id="P0DTA4"/>
    </source>
</evidence>
<evidence type="ECO:0000250" key="4">
    <source>
        <dbReference type="UniProtKB" id="Q5LUF3"/>
    </source>
</evidence>
<evidence type="ECO:0000255" key="5">
    <source>
        <dbReference type="PROSITE-ProRule" id="PRU00409"/>
    </source>
</evidence>
<evidence type="ECO:0000255" key="6">
    <source>
        <dbReference type="PROSITE-ProRule" id="PRU00969"/>
    </source>
</evidence>
<evidence type="ECO:0000255" key="7">
    <source>
        <dbReference type="PROSITE-ProRule" id="PRU01066"/>
    </source>
</evidence>
<evidence type="ECO:0000269" key="8">
    <source>
    </source>
</evidence>
<evidence type="ECO:0000305" key="9"/>
<evidence type="ECO:0000305" key="10">
    <source>
    </source>
</evidence>
<evidence type="ECO:0000312" key="11">
    <source>
        <dbReference type="MGI" id="MGI:97499"/>
    </source>
</evidence>
<evidence type="ECO:0007744" key="12">
    <source>
    </source>
</evidence>
<evidence type="ECO:0007744" key="13">
    <source>
    </source>
</evidence>
<evidence type="ECO:0007744" key="14">
    <source>
    </source>
</evidence>
<evidence type="ECO:0007744" key="15">
    <source>
    </source>
</evidence>
<protein>
    <recommendedName>
        <fullName evidence="10">Propionyl-CoA carboxylase alpha chain, mitochondrial</fullName>
        <shortName>PCCase subunit alpha</shortName>
        <ecNumber evidence="2">6.4.1.3</ecNumber>
    </recommendedName>
    <alternativeName>
        <fullName>Propanoyl-CoA:carbon dioxide ligase subunit alpha</fullName>
    </alternativeName>
</protein>
<organism>
    <name type="scientific">Mus musculus</name>
    <name type="common">Mouse</name>
    <dbReference type="NCBI Taxonomy" id="10090"/>
    <lineage>
        <taxon>Eukaryota</taxon>
        <taxon>Metazoa</taxon>
        <taxon>Chordata</taxon>
        <taxon>Craniata</taxon>
        <taxon>Vertebrata</taxon>
        <taxon>Euteleostomi</taxon>
        <taxon>Mammalia</taxon>
        <taxon>Eutheria</taxon>
        <taxon>Euarchontoglires</taxon>
        <taxon>Glires</taxon>
        <taxon>Rodentia</taxon>
        <taxon>Myomorpha</taxon>
        <taxon>Muroidea</taxon>
        <taxon>Muridae</taxon>
        <taxon>Murinae</taxon>
        <taxon>Mus</taxon>
        <taxon>Mus</taxon>
    </lineage>
</organism>
<feature type="transit peptide" description="Mitochondrion" evidence="1">
    <location>
        <begin position="1"/>
        <end position="48"/>
    </location>
</feature>
<feature type="chain" id="PRO_0000002838" description="Propionyl-CoA carboxylase alpha chain, mitochondrial">
    <location>
        <begin position="49"/>
        <end position="724"/>
    </location>
</feature>
<feature type="domain" description="Biotin carboxylation" evidence="6">
    <location>
        <begin position="58"/>
        <end position="505"/>
    </location>
</feature>
<feature type="domain" description="ATP-grasp" evidence="5">
    <location>
        <begin position="177"/>
        <end position="374"/>
    </location>
</feature>
<feature type="domain" description="Biotinyl-binding" evidence="7">
    <location>
        <begin position="645"/>
        <end position="724"/>
    </location>
</feature>
<feature type="active site" evidence="1">
    <location>
        <position position="349"/>
    </location>
</feature>
<feature type="binding site" evidence="1">
    <location>
        <position position="173"/>
    </location>
    <ligand>
        <name>ATP</name>
        <dbReference type="ChEBI" id="CHEBI:30616"/>
    </ligand>
</feature>
<feature type="binding site" evidence="5">
    <location>
        <begin position="205"/>
        <end position="266"/>
    </location>
    <ligand>
        <name>ATP</name>
        <dbReference type="ChEBI" id="CHEBI:30616"/>
    </ligand>
</feature>
<feature type="binding site" evidence="1">
    <location>
        <position position="257"/>
    </location>
    <ligand>
        <name>ATP</name>
        <dbReference type="ChEBI" id="CHEBI:30616"/>
    </ligand>
</feature>
<feature type="binding site" evidence="1">
    <location>
        <position position="292"/>
    </location>
    <ligand>
        <name>ATP</name>
        <dbReference type="ChEBI" id="CHEBI:30616"/>
    </ligand>
</feature>
<feature type="binding site" evidence="5 6">
    <location>
        <position position="332"/>
    </location>
    <ligand>
        <name>Mg(2+)</name>
        <dbReference type="ChEBI" id="CHEBI:18420"/>
        <label>1</label>
    </ligand>
</feature>
<feature type="binding site" evidence="5 6">
    <location>
        <position position="332"/>
    </location>
    <ligand>
        <name>Mn(2+)</name>
        <dbReference type="ChEBI" id="CHEBI:29035"/>
        <label>1</label>
    </ligand>
</feature>
<feature type="binding site" evidence="5 6">
    <location>
        <position position="345"/>
    </location>
    <ligand>
        <name>Mg(2+)</name>
        <dbReference type="ChEBI" id="CHEBI:18420"/>
        <label>1</label>
    </ligand>
</feature>
<feature type="binding site" evidence="5 6">
    <location>
        <position position="345"/>
    </location>
    <ligand>
        <name>Mg(2+)</name>
        <dbReference type="ChEBI" id="CHEBI:18420"/>
        <label>2</label>
    </ligand>
</feature>
<feature type="binding site" evidence="5 6">
    <location>
        <position position="345"/>
    </location>
    <ligand>
        <name>Mn(2+)</name>
        <dbReference type="ChEBI" id="CHEBI:29035"/>
        <label>1</label>
    </ligand>
</feature>
<feature type="binding site" evidence="5 6">
    <location>
        <position position="345"/>
    </location>
    <ligand>
        <name>Mn(2+)</name>
        <dbReference type="ChEBI" id="CHEBI:29035"/>
        <label>2</label>
    </ligand>
</feature>
<feature type="binding site" evidence="5 6">
    <location>
        <position position="347"/>
    </location>
    <ligand>
        <name>Mg(2+)</name>
        <dbReference type="ChEBI" id="CHEBI:18420"/>
        <label>2</label>
    </ligand>
</feature>
<feature type="binding site" evidence="5 6">
    <location>
        <position position="347"/>
    </location>
    <ligand>
        <name>Mn(2+)</name>
        <dbReference type="ChEBI" id="CHEBI:29035"/>
        <label>2</label>
    </ligand>
</feature>
<feature type="binding site" evidence="4">
    <location>
        <position position="405"/>
    </location>
    <ligand>
        <name>biotin</name>
        <dbReference type="ChEBI" id="CHEBI:57586"/>
    </ligand>
</feature>
<feature type="modified residue" description="N6-acetyllysine; alternate" evidence="14">
    <location>
        <position position="61"/>
    </location>
</feature>
<feature type="modified residue" description="N6-succinyllysine; alternate" evidence="15">
    <location>
        <position position="61"/>
    </location>
</feature>
<feature type="modified residue" description="N6-succinyllysine" evidence="15">
    <location>
        <position position="115"/>
    </location>
</feature>
<feature type="modified residue" description="N6-acetyllysine; alternate" evidence="14">
    <location>
        <position position="146"/>
    </location>
</feature>
<feature type="modified residue" description="N6-succinyllysine; alternate" evidence="15">
    <location>
        <position position="146"/>
    </location>
</feature>
<feature type="modified residue" description="N6-acetyllysine" evidence="14">
    <location>
        <position position="150"/>
    </location>
</feature>
<feature type="modified residue" description="N6-succinyllysine" evidence="15">
    <location>
        <position position="184"/>
    </location>
</feature>
<feature type="modified residue" description="N6-acetyllysine; alternate" evidence="14">
    <location>
        <position position="196"/>
    </location>
</feature>
<feature type="modified residue" description="N6-succinyllysine; alternate" evidence="15">
    <location>
        <position position="196"/>
    </location>
</feature>
<feature type="modified residue" description="Phosphoserine" evidence="12 13">
    <location>
        <position position="248"/>
    </location>
</feature>
<feature type="modified residue" description="N6-succinyllysine" evidence="15">
    <location>
        <position position="258"/>
    </location>
</feature>
<feature type="modified residue" description="N6-acetyllysine; alternate" evidence="14">
    <location>
        <position position="324"/>
    </location>
</feature>
<feature type="modified residue" description="N6-succinyllysine; alternate" evidence="15">
    <location>
        <position position="324"/>
    </location>
</feature>
<feature type="modified residue" description="N6-succinyllysine" evidence="15">
    <location>
        <position position="381"/>
    </location>
</feature>
<feature type="modified residue" description="N6-succinyllysine" evidence="15">
    <location>
        <position position="403"/>
    </location>
</feature>
<feature type="modified residue" description="N6-acetyllysine" evidence="14">
    <location>
        <position position="492"/>
    </location>
</feature>
<feature type="modified residue" description="N6-succinyllysine" evidence="15">
    <location>
        <position position="498"/>
    </location>
</feature>
<feature type="modified residue" description="N6-succinyllysine" evidence="15">
    <location>
        <position position="509"/>
    </location>
</feature>
<feature type="modified residue" description="N6-succinyllysine" evidence="15">
    <location>
        <position position="554"/>
    </location>
</feature>
<feature type="modified residue" description="N6-succinyllysine" evidence="15">
    <location>
        <position position="644"/>
    </location>
</feature>
<feature type="modified residue" description="N6-biotinyllysine; by HLCS" evidence="2 7">
    <location>
        <position position="690"/>
    </location>
</feature>
<feature type="sequence conflict" description="In Ref. 1; AAL02364." evidence="9" ref="1">
    <original>T</original>
    <variation>A</variation>
    <location>
        <position position="497"/>
    </location>
</feature>
<feature type="sequence conflict" description="In Ref. 2; AAH06915." evidence="9" ref="2">
    <original>H</original>
    <variation>R</variation>
    <location>
        <position position="542"/>
    </location>
</feature>
<feature type="sequence conflict" description="In Ref. 1; AAL02364." evidence="9" ref="1">
    <original>WELSVKL</original>
    <variation>VGALGKV</variation>
    <location>
        <begin position="555"/>
        <end position="561"/>
    </location>
</feature>
<sequence length="724" mass="79922">MAGQWVRTVALLAARRHWRRSSQQQLLGTLKHAPVYSYQCLVVSRSLSSVEYEPKEKTFDKILIANRGEIACRVIKTCKKMGIKTVAIHSDVDASSVHVKMADEAVCVGPAPTSKSYLNMDAIMEAIKKTRAQAVHPGYGFLSENKEFAKRLAAEDVTFIGPDTHAIQAMGDKIESKLLAKRAKVNTIPGFDGVVKDADEAVRIAREIGYPVMIKASAGGGGKGMRIAWDDEETRDGFRFSSQEAASSFGDDRLLIEKFIDNPRHIEIQVLGDKHGNALWLNERECSIQRRNQKVVEEAPSIFLDPETRQAMGEQAVALAKAVKYSSAGTVEFLVDSQKNFYFLEMNTRLQVEHPVTECITGLDLVQEMILVAKGYPLRHKQEDIPISGWAVECRVYAEDPYKSFGLPSIGRLSQYQEPIHLPGVRVDSGIQPGSDISIYYDPMISKLVTYGSDRAEALKRMEDALDNYVIRGVTHNIPLLREVIINTRFVKGDISTKFLSDVYPDGFKGHTLTLSERNQLLAIASSVFVASQLRAQRFQEHSRVPVIRPDVAKWELSVKLHDEDHTVVASNNGPAFTVEVDGSKLNVTSTWNLASPLLSVNVDGTQRTVQCLSREAGGNMSIQFLGTVYKVHILTKLAAELNKFMLEKVPKDTSSTLCSPMPGVVVAVSVKPGDMVAEGQEICVIEAMKMQNSMTAGKMGKVKLVHCKAGDTVGEGDLLVELE</sequence>
<accession>Q91ZA3</accession>
<accession>Q80VU5</accession>
<accession>Q922N3</accession>